<evidence type="ECO:0000255" key="1">
    <source>
        <dbReference type="HAMAP-Rule" id="MF_00129"/>
    </source>
</evidence>
<evidence type="ECO:0000305" key="2"/>
<gene>
    <name evidence="1" type="primary">mnmG</name>
    <name evidence="1" type="synonym">gidA</name>
    <name type="ordered locus">SAG2142</name>
</gene>
<dbReference type="EMBL" id="AE009948">
    <property type="protein sequence ID" value="AAN01000.1"/>
    <property type="status" value="ALT_FRAME"/>
    <property type="molecule type" value="Genomic_DNA"/>
</dbReference>
<dbReference type="RefSeq" id="NP_689127.1">
    <property type="nucleotide sequence ID" value="NC_004116.1"/>
</dbReference>
<dbReference type="SMR" id="P0A3F1"/>
<dbReference type="STRING" id="208435.SAG2142"/>
<dbReference type="KEGG" id="sag:SAG2142"/>
<dbReference type="PATRIC" id="fig|208435.3.peg.2145"/>
<dbReference type="HOGENOM" id="CLU_007831_2_2_9"/>
<dbReference type="OrthoDB" id="9815560at2"/>
<dbReference type="Proteomes" id="UP000000821">
    <property type="component" value="Chromosome"/>
</dbReference>
<dbReference type="GO" id="GO:0005829">
    <property type="term" value="C:cytosol"/>
    <property type="evidence" value="ECO:0007669"/>
    <property type="project" value="TreeGrafter"/>
</dbReference>
<dbReference type="GO" id="GO:0050660">
    <property type="term" value="F:flavin adenine dinucleotide binding"/>
    <property type="evidence" value="ECO:0007669"/>
    <property type="project" value="UniProtKB-UniRule"/>
</dbReference>
<dbReference type="GO" id="GO:0030488">
    <property type="term" value="P:tRNA methylation"/>
    <property type="evidence" value="ECO:0007669"/>
    <property type="project" value="TreeGrafter"/>
</dbReference>
<dbReference type="GO" id="GO:0002098">
    <property type="term" value="P:tRNA wobble uridine modification"/>
    <property type="evidence" value="ECO:0007669"/>
    <property type="project" value="InterPro"/>
</dbReference>
<dbReference type="FunFam" id="1.10.10.1800:FF:000001">
    <property type="entry name" value="tRNA uridine 5-carboxymethylaminomethyl modification enzyme MnmG"/>
    <property type="match status" value="1"/>
</dbReference>
<dbReference type="FunFam" id="1.10.150.570:FF:000001">
    <property type="entry name" value="tRNA uridine 5-carboxymethylaminomethyl modification enzyme MnmG"/>
    <property type="match status" value="1"/>
</dbReference>
<dbReference type="FunFam" id="3.50.50.60:FF:000002">
    <property type="entry name" value="tRNA uridine 5-carboxymethylaminomethyl modification enzyme MnmG"/>
    <property type="match status" value="1"/>
</dbReference>
<dbReference type="FunFam" id="3.50.50.60:FF:000063">
    <property type="entry name" value="tRNA uridine 5-carboxymethylaminomethyl modification enzyme MnmG"/>
    <property type="match status" value="1"/>
</dbReference>
<dbReference type="Gene3D" id="3.50.50.60">
    <property type="entry name" value="FAD/NAD(P)-binding domain"/>
    <property type="match status" value="2"/>
</dbReference>
<dbReference type="Gene3D" id="1.10.150.570">
    <property type="entry name" value="GidA associated domain, C-terminal subdomain"/>
    <property type="match status" value="1"/>
</dbReference>
<dbReference type="Gene3D" id="1.10.10.1800">
    <property type="entry name" value="tRNA uridine 5-carboxymethylaminomethyl modification enzyme MnmG/GidA"/>
    <property type="match status" value="1"/>
</dbReference>
<dbReference type="HAMAP" id="MF_00129">
    <property type="entry name" value="MnmG_GidA"/>
    <property type="match status" value="1"/>
</dbReference>
<dbReference type="InterPro" id="IPR036188">
    <property type="entry name" value="FAD/NAD-bd_sf"/>
</dbReference>
<dbReference type="InterPro" id="IPR049312">
    <property type="entry name" value="GIDA_C_N"/>
</dbReference>
<dbReference type="InterPro" id="IPR004416">
    <property type="entry name" value="MnmG"/>
</dbReference>
<dbReference type="InterPro" id="IPR002218">
    <property type="entry name" value="MnmG-rel"/>
</dbReference>
<dbReference type="InterPro" id="IPR020595">
    <property type="entry name" value="MnmG-rel_CS"/>
</dbReference>
<dbReference type="InterPro" id="IPR026904">
    <property type="entry name" value="MnmG_C"/>
</dbReference>
<dbReference type="InterPro" id="IPR047001">
    <property type="entry name" value="MnmG_C_subdom"/>
</dbReference>
<dbReference type="InterPro" id="IPR044920">
    <property type="entry name" value="MnmG_C_subdom_sf"/>
</dbReference>
<dbReference type="InterPro" id="IPR040131">
    <property type="entry name" value="MnmG_N"/>
</dbReference>
<dbReference type="NCBIfam" id="TIGR00136">
    <property type="entry name" value="mnmG_gidA"/>
    <property type="match status" value="1"/>
</dbReference>
<dbReference type="PANTHER" id="PTHR11806">
    <property type="entry name" value="GLUCOSE INHIBITED DIVISION PROTEIN A"/>
    <property type="match status" value="1"/>
</dbReference>
<dbReference type="PANTHER" id="PTHR11806:SF0">
    <property type="entry name" value="PROTEIN MTO1 HOMOLOG, MITOCHONDRIAL"/>
    <property type="match status" value="1"/>
</dbReference>
<dbReference type="Pfam" id="PF01134">
    <property type="entry name" value="GIDA"/>
    <property type="match status" value="1"/>
</dbReference>
<dbReference type="Pfam" id="PF21680">
    <property type="entry name" value="GIDA_C_1st"/>
    <property type="match status" value="1"/>
</dbReference>
<dbReference type="Pfam" id="PF13932">
    <property type="entry name" value="SAM_GIDA_C"/>
    <property type="match status" value="1"/>
</dbReference>
<dbReference type="PRINTS" id="PR00411">
    <property type="entry name" value="PNDRDTASEI"/>
</dbReference>
<dbReference type="SMART" id="SM01228">
    <property type="entry name" value="GIDA_assoc_3"/>
    <property type="match status" value="1"/>
</dbReference>
<dbReference type="SUPFAM" id="SSF51905">
    <property type="entry name" value="FAD/NAD(P)-binding domain"/>
    <property type="match status" value="1"/>
</dbReference>
<dbReference type="PROSITE" id="PS01280">
    <property type="entry name" value="GIDA_1"/>
    <property type="match status" value="1"/>
</dbReference>
<dbReference type="PROSITE" id="PS01281">
    <property type="entry name" value="GIDA_2"/>
    <property type="match status" value="1"/>
</dbReference>
<organism>
    <name type="scientific">Streptococcus agalactiae serotype V (strain ATCC BAA-611 / 2603 V/R)</name>
    <dbReference type="NCBI Taxonomy" id="208435"/>
    <lineage>
        <taxon>Bacteria</taxon>
        <taxon>Bacillati</taxon>
        <taxon>Bacillota</taxon>
        <taxon>Bacilli</taxon>
        <taxon>Lactobacillales</taxon>
        <taxon>Streptococcaceae</taxon>
        <taxon>Streptococcus</taxon>
    </lineage>
</organism>
<proteinExistence type="inferred from homology"/>
<accession>P0A3F1</accession>
<accession>Q8DWS1</accession>
<accession>Q8E2M1</accession>
<protein>
    <recommendedName>
        <fullName evidence="1">tRNA uridine 5-carboxymethylaminomethyl modification enzyme MnmG</fullName>
    </recommendedName>
    <alternativeName>
        <fullName evidence="1">Glucose-inhibited division protein A</fullName>
    </alternativeName>
</protein>
<reference key="1">
    <citation type="journal article" date="2002" name="Proc. Natl. Acad. Sci. U.S.A.">
        <title>Complete genome sequence and comparative genomic analysis of an emerging human pathogen, serotype V Streptococcus agalactiae.</title>
        <authorList>
            <person name="Tettelin H."/>
            <person name="Masignani V."/>
            <person name="Cieslewicz M.J."/>
            <person name="Eisen J.A."/>
            <person name="Peterson S.N."/>
            <person name="Wessels M.R."/>
            <person name="Paulsen I.T."/>
            <person name="Nelson K.E."/>
            <person name="Margarit I."/>
            <person name="Read T.D."/>
            <person name="Madoff L.C."/>
            <person name="Wolf A.M."/>
            <person name="Beanan M.J."/>
            <person name="Brinkac L.M."/>
            <person name="Daugherty S.C."/>
            <person name="DeBoy R.T."/>
            <person name="Durkin A.S."/>
            <person name="Kolonay J.F."/>
            <person name="Madupu R."/>
            <person name="Lewis M.R."/>
            <person name="Radune D."/>
            <person name="Fedorova N.B."/>
            <person name="Scanlan D."/>
            <person name="Khouri H.M."/>
            <person name="Mulligan S."/>
            <person name="Carty H.A."/>
            <person name="Cline R.T."/>
            <person name="Van Aken S.E."/>
            <person name="Gill J."/>
            <person name="Scarselli M."/>
            <person name="Mora M."/>
            <person name="Iacobini E.T."/>
            <person name="Brettoni C."/>
            <person name="Galli G."/>
            <person name="Mariani M."/>
            <person name="Vegni F."/>
            <person name="Maione D."/>
            <person name="Rinaudo D."/>
            <person name="Rappuoli R."/>
            <person name="Telford J.L."/>
            <person name="Kasper D.L."/>
            <person name="Grandi G."/>
            <person name="Fraser C.M."/>
        </authorList>
    </citation>
    <scope>NUCLEOTIDE SEQUENCE [LARGE SCALE GENOMIC DNA]</scope>
    <source>
        <strain>ATCC BAA-611 / 2603 V/R</strain>
    </source>
</reference>
<feature type="chain" id="PRO_0000117185" description="tRNA uridine 5-carboxymethylaminomethyl modification enzyme MnmG">
    <location>
        <begin position="1"/>
        <end position="633"/>
    </location>
</feature>
<feature type="binding site" evidence="1">
    <location>
        <begin position="15"/>
        <end position="20"/>
    </location>
    <ligand>
        <name>FAD</name>
        <dbReference type="ChEBI" id="CHEBI:57692"/>
    </ligand>
</feature>
<feature type="binding site" evidence="1">
    <location>
        <position position="127"/>
    </location>
    <ligand>
        <name>FAD</name>
        <dbReference type="ChEBI" id="CHEBI:57692"/>
    </ligand>
</feature>
<feature type="binding site" evidence="1">
    <location>
        <position position="182"/>
    </location>
    <ligand>
        <name>FAD</name>
        <dbReference type="ChEBI" id="CHEBI:57692"/>
    </ligand>
</feature>
<feature type="binding site" evidence="1">
    <location>
        <begin position="276"/>
        <end position="290"/>
    </location>
    <ligand>
        <name>NAD(+)</name>
        <dbReference type="ChEBI" id="CHEBI:57540"/>
    </ligand>
</feature>
<feature type="binding site" evidence="1">
    <location>
        <position position="373"/>
    </location>
    <ligand>
        <name>FAD</name>
        <dbReference type="ChEBI" id="CHEBI:57692"/>
    </ligand>
</feature>
<comment type="function">
    <text evidence="1">NAD-binding protein involved in the addition of a carboxymethylaminomethyl (cmnm) group at the wobble position (U34) of certain tRNAs, forming tRNA-cmnm(5)s(2)U34.</text>
</comment>
<comment type="cofactor">
    <cofactor evidence="1">
        <name>FAD</name>
        <dbReference type="ChEBI" id="CHEBI:57692"/>
    </cofactor>
</comment>
<comment type="subunit">
    <text evidence="1">Homodimer. Heterotetramer of two MnmE and two MnmG subunits.</text>
</comment>
<comment type="subcellular location">
    <subcellularLocation>
        <location evidence="1">Cytoplasm</location>
    </subcellularLocation>
</comment>
<comment type="similarity">
    <text evidence="1">Belongs to the MnmG family.</text>
</comment>
<comment type="sequence caution" evidence="2">
    <conflict type="frameshift">
        <sequence resource="EMBL-CDS" id="AAN01000"/>
    </conflict>
</comment>
<sequence>MTHNFAENYDIIVVGAGHAGVEASLAASRMGCKTLLATINLEMLAFMPCNPSIGGSAKGIVVREIDALGGEMGKNIDKTYIQMKMLNTGKGPAVRALRAQADKALYAQTMKQTVEKQENLTLRQAMIDEILVEDGKVVGVRTATNQKFSAKSVVITTGTALRGEIILGDLKYSSGPNNSLASVTLADNLRDLGLEIGRFKTGTPPRVKASSINYEKTEIQPGDEQPNHFSFMSRDEDYITDQVPCWLTYTNTLSHDIINQNLHRAPMFSGIVKGVGPRYCPSIEDKIVRFADKERHQLFLEPEGRYTEEVYVQGLSTSLPEDVQVDLLRSIKGLENAEMMRTGYAIEYDIVLPHQLRATLETKVIAGLFTAGQTNGTSGYEEAAGQGLVAGINAALKVQGKPELILKRSDAYIGVMIDDLVTKGTLEPYRLLTSRAEYRLILRHDNADMRLTEIGYEIGLVDEERYAIFKKRQMQFENELERLDSIKLKPVSETNKRIQELGFKPLTDALTAKEFMRRPQITYAVATDFVGCADEPLDSKVIELLETEIKYEGYIKKALDQVAKMKRMEEKRIPPHIDWDDIDSIATEARQKFKKINPETLGQASRISGVNPADISILMVYLEGRQKGRKNIN</sequence>
<keyword id="KW-0963">Cytoplasm</keyword>
<keyword id="KW-0274">FAD</keyword>
<keyword id="KW-0285">Flavoprotein</keyword>
<keyword id="KW-0520">NAD</keyword>
<keyword id="KW-1185">Reference proteome</keyword>
<keyword id="KW-0819">tRNA processing</keyword>
<name>MNMG_STRA5</name>